<reference key="1">
    <citation type="submission" date="1995-10" db="EMBL/GenBank/DDBJ databases">
        <authorList>
            <person name="Robison K."/>
            <person name="Estep P."/>
            <person name="O'Keeffe T."/>
            <person name="Church G.M."/>
        </authorList>
    </citation>
    <scope>NUCLEOTIDE SEQUENCE [GENOMIC DNA]</scope>
    <source>
        <strain>K12 / EMG2</strain>
    </source>
</reference>
<reference key="2">
    <citation type="journal article" date="1996" name="DNA Res.">
        <title>A 460-kb DNA sequence of the Escherichia coli K-12 genome corresponding to the 40.1-50.0 min region on the linkage map.</title>
        <authorList>
            <person name="Itoh T."/>
            <person name="Aiba H."/>
            <person name="Baba T."/>
            <person name="Fujita K."/>
            <person name="Hayashi K."/>
            <person name="Inada T."/>
            <person name="Isono K."/>
            <person name="Kasai H."/>
            <person name="Kimura S."/>
            <person name="Kitakawa M."/>
            <person name="Kitagawa M."/>
            <person name="Makino K."/>
            <person name="Miki T."/>
            <person name="Mizobuchi K."/>
            <person name="Mori H."/>
            <person name="Mori T."/>
            <person name="Motomura K."/>
            <person name="Nakade S."/>
            <person name="Nakamura Y."/>
            <person name="Nashimoto H."/>
            <person name="Nishio Y."/>
            <person name="Oshima T."/>
            <person name="Saito N."/>
            <person name="Sampei G."/>
            <person name="Seki Y."/>
            <person name="Sivasundaram S."/>
            <person name="Tagami H."/>
            <person name="Takeda J."/>
            <person name="Takemoto K."/>
            <person name="Wada C."/>
            <person name="Yamamoto Y."/>
            <person name="Horiuchi T."/>
        </authorList>
    </citation>
    <scope>NUCLEOTIDE SEQUENCE [LARGE SCALE GENOMIC DNA]</scope>
    <source>
        <strain>K12 / W3110 / ATCC 27325 / DSM 5911</strain>
    </source>
</reference>
<reference key="3">
    <citation type="journal article" date="1997" name="Science">
        <title>The complete genome sequence of Escherichia coli K-12.</title>
        <authorList>
            <person name="Blattner F.R."/>
            <person name="Plunkett G. III"/>
            <person name="Bloch C.A."/>
            <person name="Perna N.T."/>
            <person name="Burland V."/>
            <person name="Riley M."/>
            <person name="Collado-Vides J."/>
            <person name="Glasner J.D."/>
            <person name="Rode C.K."/>
            <person name="Mayhew G.F."/>
            <person name="Gregor J."/>
            <person name="Davis N.W."/>
            <person name="Kirkpatrick H.A."/>
            <person name="Goeden M.A."/>
            <person name="Rose D.J."/>
            <person name="Mau B."/>
            <person name="Shao Y."/>
        </authorList>
    </citation>
    <scope>NUCLEOTIDE SEQUENCE [LARGE SCALE GENOMIC DNA]</scope>
    <source>
        <strain>K12 / MG1655 / ATCC 47076</strain>
    </source>
</reference>
<reference key="4">
    <citation type="journal article" date="2006" name="Mol. Syst. Biol.">
        <title>Highly accurate genome sequences of Escherichia coli K-12 strains MG1655 and W3110.</title>
        <authorList>
            <person name="Hayashi K."/>
            <person name="Morooka N."/>
            <person name="Yamamoto Y."/>
            <person name="Fujita K."/>
            <person name="Isono K."/>
            <person name="Choi S."/>
            <person name="Ohtsubo E."/>
            <person name="Baba T."/>
            <person name="Wanner B.L."/>
            <person name="Mori H."/>
            <person name="Horiuchi T."/>
        </authorList>
    </citation>
    <scope>NUCLEOTIDE SEQUENCE [LARGE SCALE GENOMIC DNA]</scope>
    <source>
        <strain>K12 / W3110 / ATCC 27325 / DSM 5911</strain>
    </source>
</reference>
<organism>
    <name type="scientific">Escherichia coli (strain K12)</name>
    <dbReference type="NCBI Taxonomy" id="83333"/>
    <lineage>
        <taxon>Bacteria</taxon>
        <taxon>Pseudomonadati</taxon>
        <taxon>Pseudomonadota</taxon>
        <taxon>Gammaproteobacteria</taxon>
        <taxon>Enterobacterales</taxon>
        <taxon>Enterobacteriaceae</taxon>
        <taxon>Escherichia</taxon>
    </lineage>
</organism>
<protein>
    <recommendedName>
        <fullName>Bacterial non-heme ferritin-like protein</fullName>
    </recommendedName>
</protein>
<name>FTNB_ECOLI</name>
<evidence type="ECO:0000255" key="1">
    <source>
        <dbReference type="PROSITE-ProRule" id="PRU00085"/>
    </source>
</evidence>
<evidence type="ECO:0000305" key="2"/>
<feature type="chain" id="PRO_0000201089" description="Bacterial non-heme ferritin-like protein">
    <location>
        <begin position="1"/>
        <end position="167"/>
    </location>
</feature>
<feature type="domain" description="Ferritin-like diiron" evidence="1">
    <location>
        <begin position="1"/>
        <end position="145"/>
    </location>
</feature>
<feature type="sequence conflict" description="In Ref. 1; AAA81671." evidence="2" ref="1">
    <original>V</original>
    <variation>A</variation>
    <location>
        <position position="117"/>
    </location>
</feature>
<feature type="sequence conflict" description="In Ref. 1; AAA81671." evidence="2" ref="1">
    <original>Q</original>
    <variation>E</variation>
    <location>
        <position position="128"/>
    </location>
</feature>
<feature type="sequence conflict" description="In Ref. 1; AAA81671." evidence="2" ref="1">
    <original>LLQTILDEVRSAKLAGMCPVQTDQHVLNVVSHQLH</original>
    <variation>VAANHS</variation>
    <location>
        <begin position="133"/>
        <end position="167"/>
    </location>
</feature>
<dbReference type="EMBL" id="U39484">
    <property type="protein sequence ID" value="AAA81671.1"/>
    <property type="status" value="ALT_INIT"/>
    <property type="molecule type" value="Genomic_DNA"/>
</dbReference>
<dbReference type="EMBL" id="U00096">
    <property type="protein sequence ID" value="AAC74972.1"/>
    <property type="molecule type" value="Genomic_DNA"/>
</dbReference>
<dbReference type="EMBL" id="AP009048">
    <property type="protein sequence ID" value="BAA15726.1"/>
    <property type="molecule type" value="Genomic_DNA"/>
</dbReference>
<dbReference type="PIR" id="F64953">
    <property type="entry name" value="F64953"/>
</dbReference>
<dbReference type="RefSeq" id="NP_416415.1">
    <property type="nucleotide sequence ID" value="NC_000913.3"/>
</dbReference>
<dbReference type="RefSeq" id="WP_000179469.1">
    <property type="nucleotide sequence ID" value="NZ_STEB01000026.1"/>
</dbReference>
<dbReference type="SMR" id="P0A9A2"/>
<dbReference type="BioGRID" id="4261036">
    <property type="interactions" value="13"/>
</dbReference>
<dbReference type="BioGRID" id="850764">
    <property type="interactions" value="3"/>
</dbReference>
<dbReference type="FunCoup" id="P0A9A2">
    <property type="interactions" value="206"/>
</dbReference>
<dbReference type="IntAct" id="P0A9A2">
    <property type="interactions" value="8"/>
</dbReference>
<dbReference type="STRING" id="511145.b1902"/>
<dbReference type="jPOST" id="P0A9A2"/>
<dbReference type="PaxDb" id="511145-b1902"/>
<dbReference type="EnsemblBacteria" id="AAC74972">
    <property type="protein sequence ID" value="AAC74972"/>
    <property type="gene ID" value="b1902"/>
</dbReference>
<dbReference type="GeneID" id="946407"/>
<dbReference type="KEGG" id="ecj:JW1890"/>
<dbReference type="KEGG" id="eco:b1902"/>
<dbReference type="KEGG" id="ecoc:C3026_10795"/>
<dbReference type="PATRIC" id="fig|1411691.4.peg.348"/>
<dbReference type="EchoBASE" id="EB2967"/>
<dbReference type="eggNOG" id="COG1528">
    <property type="taxonomic scope" value="Bacteria"/>
</dbReference>
<dbReference type="HOGENOM" id="CLU_065681_1_3_6"/>
<dbReference type="InParanoid" id="P0A9A2"/>
<dbReference type="OMA" id="SNVTHMM"/>
<dbReference type="OrthoDB" id="9801481at2"/>
<dbReference type="PhylomeDB" id="P0A9A2"/>
<dbReference type="BioCyc" id="EcoCyc:G7033-MONOMER"/>
<dbReference type="PRO" id="PR:P0A9A2"/>
<dbReference type="Proteomes" id="UP000000625">
    <property type="component" value="Chromosome"/>
</dbReference>
<dbReference type="GO" id="GO:0005737">
    <property type="term" value="C:cytoplasm"/>
    <property type="evidence" value="ECO:0000318"/>
    <property type="project" value="GO_Central"/>
</dbReference>
<dbReference type="GO" id="GO:0005829">
    <property type="term" value="C:cytosol"/>
    <property type="evidence" value="ECO:0000314"/>
    <property type="project" value="EcoCyc"/>
</dbReference>
<dbReference type="GO" id="GO:0008199">
    <property type="term" value="F:ferric iron binding"/>
    <property type="evidence" value="ECO:0000318"/>
    <property type="project" value="GO_Central"/>
</dbReference>
<dbReference type="GO" id="GO:0008198">
    <property type="term" value="F:ferrous iron binding"/>
    <property type="evidence" value="ECO:0000318"/>
    <property type="project" value="GO_Central"/>
</dbReference>
<dbReference type="GO" id="GO:0004322">
    <property type="term" value="F:ferroxidase activity"/>
    <property type="evidence" value="ECO:0000318"/>
    <property type="project" value="GO_Central"/>
</dbReference>
<dbReference type="CDD" id="cd01055">
    <property type="entry name" value="Nonheme_Ferritin"/>
    <property type="match status" value="1"/>
</dbReference>
<dbReference type="FunFam" id="1.20.1260.10:FF:000004">
    <property type="entry name" value="Ferritin"/>
    <property type="match status" value="1"/>
</dbReference>
<dbReference type="Gene3D" id="1.20.1260.10">
    <property type="match status" value="1"/>
</dbReference>
<dbReference type="InterPro" id="IPR012347">
    <property type="entry name" value="Ferritin-like"/>
</dbReference>
<dbReference type="InterPro" id="IPR009040">
    <property type="entry name" value="Ferritin-like_diiron"/>
</dbReference>
<dbReference type="InterPro" id="IPR009078">
    <property type="entry name" value="Ferritin-like_SF"/>
</dbReference>
<dbReference type="InterPro" id="IPR008331">
    <property type="entry name" value="Ferritin_DPS_dom"/>
</dbReference>
<dbReference type="InterPro" id="IPR041719">
    <property type="entry name" value="Ferritin_prok"/>
</dbReference>
<dbReference type="NCBIfam" id="NF011597">
    <property type="entry name" value="PRK15022.1"/>
    <property type="match status" value="1"/>
</dbReference>
<dbReference type="Pfam" id="PF00210">
    <property type="entry name" value="Ferritin"/>
    <property type="match status" value="1"/>
</dbReference>
<dbReference type="SUPFAM" id="SSF47240">
    <property type="entry name" value="Ferritin-like"/>
    <property type="match status" value="1"/>
</dbReference>
<dbReference type="PROSITE" id="PS50905">
    <property type="entry name" value="FERRITIN_LIKE"/>
    <property type="match status" value="1"/>
</dbReference>
<comment type="subcellular location">
    <subcellularLocation>
        <location evidence="2">Cytoplasm</location>
    </subcellularLocation>
</comment>
<comment type="similarity">
    <text evidence="2">Belongs to the ferritin family. Prokaryotic subfamily.</text>
</comment>
<comment type="sequence caution" evidence="2">
    <conflict type="erroneous initiation">
        <sequence resource="EMBL-CDS" id="AAA81671"/>
    </conflict>
    <text>Truncated N-terminus.</text>
</comment>
<proteinExistence type="inferred from homology"/>
<sequence>MATAGMLLKLNSQMNREFYASNLYLHLSNWCSEQSLNGTATFLRAQAQSNVTQMMRMFNFMKSVGATPIVKAIDVPGEKLNSLEELFQKTMEEYEQRSSTLAQLADEAKELNDDSTVNFLRDLEKEQQHDGLLLQTILDEVRSAKLAGMCPVQTDQHVLNVVSHQLH</sequence>
<accession>P0A9A2</accession>
<accession>P52091</accession>
<accession>P76306</accession>
<accession>P94744</accession>
<keyword id="KW-0963">Cytoplasm</keyword>
<keyword id="KW-1185">Reference proteome</keyword>
<gene>
    <name type="primary">ftnB</name>
    <name type="synonym">yecI</name>
    <name type="ordered locus">b1902</name>
    <name type="ordered locus">JW1890</name>
</gene>